<dbReference type="EC" id="2.3.1.47" evidence="1"/>
<dbReference type="EMBL" id="CP000247">
    <property type="protein sequence ID" value="ABG68809.1"/>
    <property type="molecule type" value="Genomic_DNA"/>
</dbReference>
<dbReference type="RefSeq" id="WP_000638125.1">
    <property type="nucleotide sequence ID" value="NC_008253.1"/>
</dbReference>
<dbReference type="SMR" id="Q0TJS2"/>
<dbReference type="KEGG" id="ecp:ECP_0790"/>
<dbReference type="HOGENOM" id="CLU_015846_11_2_6"/>
<dbReference type="UniPathway" id="UPA00078"/>
<dbReference type="Proteomes" id="UP000009182">
    <property type="component" value="Chromosome"/>
</dbReference>
<dbReference type="GO" id="GO:0008710">
    <property type="term" value="F:8-amino-7-oxononanoate synthase activity"/>
    <property type="evidence" value="ECO:0007669"/>
    <property type="project" value="UniProtKB-UniRule"/>
</dbReference>
<dbReference type="GO" id="GO:0030170">
    <property type="term" value="F:pyridoxal phosphate binding"/>
    <property type="evidence" value="ECO:0007669"/>
    <property type="project" value="UniProtKB-UniRule"/>
</dbReference>
<dbReference type="GO" id="GO:0009102">
    <property type="term" value="P:biotin biosynthetic process"/>
    <property type="evidence" value="ECO:0007669"/>
    <property type="project" value="UniProtKB-UniRule"/>
</dbReference>
<dbReference type="CDD" id="cd06454">
    <property type="entry name" value="KBL_like"/>
    <property type="match status" value="1"/>
</dbReference>
<dbReference type="FunFam" id="3.40.640.10:FF:000095">
    <property type="entry name" value="8-amino-7-oxononanoate synthase"/>
    <property type="match status" value="1"/>
</dbReference>
<dbReference type="FunFam" id="3.90.1150.10:FF:000036">
    <property type="entry name" value="8-amino-7-oxononanoate synthase"/>
    <property type="match status" value="1"/>
</dbReference>
<dbReference type="Gene3D" id="3.90.1150.10">
    <property type="entry name" value="Aspartate Aminotransferase, domain 1"/>
    <property type="match status" value="1"/>
</dbReference>
<dbReference type="Gene3D" id="3.40.640.10">
    <property type="entry name" value="Type I PLP-dependent aspartate aminotransferase-like (Major domain)"/>
    <property type="match status" value="1"/>
</dbReference>
<dbReference type="HAMAP" id="MF_01693">
    <property type="entry name" value="BioF_aminotrans_2"/>
    <property type="match status" value="1"/>
</dbReference>
<dbReference type="InterPro" id="IPR001917">
    <property type="entry name" value="Aminotrans_II_pyridoxalP_BS"/>
</dbReference>
<dbReference type="InterPro" id="IPR004839">
    <property type="entry name" value="Aminotransferase_I/II_large"/>
</dbReference>
<dbReference type="InterPro" id="IPR050087">
    <property type="entry name" value="AON_synthase_class-II"/>
</dbReference>
<dbReference type="InterPro" id="IPR004723">
    <property type="entry name" value="AONS_Archaea/Proteobacteria"/>
</dbReference>
<dbReference type="InterPro" id="IPR022834">
    <property type="entry name" value="AONS_Proteobacteria"/>
</dbReference>
<dbReference type="InterPro" id="IPR015424">
    <property type="entry name" value="PyrdxlP-dep_Trfase"/>
</dbReference>
<dbReference type="InterPro" id="IPR015421">
    <property type="entry name" value="PyrdxlP-dep_Trfase_major"/>
</dbReference>
<dbReference type="InterPro" id="IPR015422">
    <property type="entry name" value="PyrdxlP-dep_Trfase_small"/>
</dbReference>
<dbReference type="NCBIfam" id="TIGR00858">
    <property type="entry name" value="bioF"/>
    <property type="match status" value="1"/>
</dbReference>
<dbReference type="PANTHER" id="PTHR13693:SF100">
    <property type="entry name" value="8-AMINO-7-OXONONANOATE SYNTHASE"/>
    <property type="match status" value="1"/>
</dbReference>
<dbReference type="PANTHER" id="PTHR13693">
    <property type="entry name" value="CLASS II AMINOTRANSFERASE/8-AMINO-7-OXONONANOATE SYNTHASE"/>
    <property type="match status" value="1"/>
</dbReference>
<dbReference type="Pfam" id="PF00155">
    <property type="entry name" value="Aminotran_1_2"/>
    <property type="match status" value="1"/>
</dbReference>
<dbReference type="SUPFAM" id="SSF53383">
    <property type="entry name" value="PLP-dependent transferases"/>
    <property type="match status" value="1"/>
</dbReference>
<dbReference type="PROSITE" id="PS00599">
    <property type="entry name" value="AA_TRANSFER_CLASS_2"/>
    <property type="match status" value="1"/>
</dbReference>
<comment type="function">
    <text evidence="1">Catalyzes the decarboxylative condensation of pimeloyl-[acyl-carrier protein] and L-alanine to produce 8-amino-7-oxononanoate (AON), [acyl-carrier protein], and carbon dioxide.</text>
</comment>
<comment type="catalytic activity">
    <reaction evidence="1">
        <text>6-carboxyhexanoyl-[ACP] + L-alanine + H(+) = (8S)-8-amino-7-oxononanoate + holo-[ACP] + CO2</text>
        <dbReference type="Rhea" id="RHEA:42288"/>
        <dbReference type="Rhea" id="RHEA-COMP:9685"/>
        <dbReference type="Rhea" id="RHEA-COMP:9955"/>
        <dbReference type="ChEBI" id="CHEBI:15378"/>
        <dbReference type="ChEBI" id="CHEBI:16526"/>
        <dbReference type="ChEBI" id="CHEBI:57972"/>
        <dbReference type="ChEBI" id="CHEBI:64479"/>
        <dbReference type="ChEBI" id="CHEBI:78846"/>
        <dbReference type="ChEBI" id="CHEBI:149468"/>
        <dbReference type="EC" id="2.3.1.47"/>
    </reaction>
</comment>
<comment type="cofactor">
    <cofactor evidence="1">
        <name>pyridoxal 5'-phosphate</name>
        <dbReference type="ChEBI" id="CHEBI:597326"/>
    </cofactor>
</comment>
<comment type="pathway">
    <text evidence="1">Cofactor biosynthesis; biotin biosynthesis.</text>
</comment>
<comment type="subunit">
    <text evidence="1">Homodimer.</text>
</comment>
<comment type="similarity">
    <text evidence="1">Belongs to the class-II pyridoxal-phosphate-dependent aminotransferase family. BioF subfamily.</text>
</comment>
<accession>Q0TJS2</accession>
<evidence type="ECO:0000255" key="1">
    <source>
        <dbReference type="HAMAP-Rule" id="MF_01693"/>
    </source>
</evidence>
<sequence>MIWQEKIDAALDARRVADALRRRYPVAQGAGRWLVADDCQYLNFSSNDYLGLSHHPQIIRAWQQGAEQFGVGSGGSGHVSGYSVAHQVLEEELAEWLGYSRALLFISGFAANQAVIAAMMAKEDRIVADRLSHASLLEAASLSPSPLRRFAHNDVTHLARLLASPCPGQQLVVTEGVFSMDGDSAPLEEIQQVTQQHDGWLMVDDAHGTGVIGEQGRGSCWLQKVKPELLVVTFGKGFGVSGAAVLCSNTVADYLLQFARHLIYSTSMPPAQAQALRASLAVIRSDEGDARREKLAALITRFRAGVQDLPFTLADSWSAIQPLIVGDNSRALQLAEKLRQQGCWVTAIRPPTVPAGTARLRLTLTAAHEMQDIDRLLEVLHGNG</sequence>
<organism>
    <name type="scientific">Escherichia coli O6:K15:H31 (strain 536 / UPEC)</name>
    <dbReference type="NCBI Taxonomy" id="362663"/>
    <lineage>
        <taxon>Bacteria</taxon>
        <taxon>Pseudomonadati</taxon>
        <taxon>Pseudomonadota</taxon>
        <taxon>Gammaproteobacteria</taxon>
        <taxon>Enterobacterales</taxon>
        <taxon>Enterobacteriaceae</taxon>
        <taxon>Escherichia</taxon>
    </lineage>
</organism>
<protein>
    <recommendedName>
        <fullName evidence="1">8-amino-7-oxononanoate synthase</fullName>
        <shortName evidence="1">AONS</shortName>
        <ecNumber evidence="1">2.3.1.47</ecNumber>
    </recommendedName>
    <alternativeName>
        <fullName evidence="1">7-keto-8-amino-pelargonic acid synthase</fullName>
        <shortName evidence="1">7-KAP synthase</shortName>
        <shortName evidence="1">KAPA synthase</shortName>
    </alternativeName>
    <alternativeName>
        <fullName evidence="1">8-amino-7-ketopelargonate synthase</fullName>
    </alternativeName>
</protein>
<keyword id="KW-0093">Biotin biosynthesis</keyword>
<keyword id="KW-0663">Pyridoxal phosphate</keyword>
<keyword id="KW-0808">Transferase</keyword>
<feature type="chain" id="PRO_0000380979" description="8-amino-7-oxononanoate synthase">
    <location>
        <begin position="1"/>
        <end position="384"/>
    </location>
</feature>
<feature type="binding site" evidence="1">
    <location>
        <position position="21"/>
    </location>
    <ligand>
        <name>substrate</name>
    </ligand>
</feature>
<feature type="binding site" evidence="1">
    <location>
        <begin position="108"/>
        <end position="109"/>
    </location>
    <ligand>
        <name>pyridoxal 5'-phosphate</name>
        <dbReference type="ChEBI" id="CHEBI:597326"/>
    </ligand>
</feature>
<feature type="binding site" evidence="1">
    <location>
        <position position="133"/>
    </location>
    <ligand>
        <name>substrate</name>
    </ligand>
</feature>
<feature type="binding site" evidence="1">
    <location>
        <position position="179"/>
    </location>
    <ligand>
        <name>pyridoxal 5'-phosphate</name>
        <dbReference type="ChEBI" id="CHEBI:597326"/>
    </ligand>
</feature>
<feature type="binding site" evidence="1">
    <location>
        <position position="207"/>
    </location>
    <ligand>
        <name>pyridoxal 5'-phosphate</name>
        <dbReference type="ChEBI" id="CHEBI:597326"/>
    </ligand>
</feature>
<feature type="binding site" evidence="1">
    <location>
        <position position="233"/>
    </location>
    <ligand>
        <name>pyridoxal 5'-phosphate</name>
        <dbReference type="ChEBI" id="CHEBI:597326"/>
    </ligand>
</feature>
<feature type="binding site" evidence="1">
    <location>
        <position position="352"/>
    </location>
    <ligand>
        <name>substrate</name>
    </ligand>
</feature>
<feature type="modified residue" description="N6-(pyridoxal phosphate)lysine" evidence="1">
    <location>
        <position position="236"/>
    </location>
</feature>
<name>BIOF_ECOL5</name>
<reference key="1">
    <citation type="journal article" date="2006" name="Mol. Microbiol.">
        <title>Role of pathogenicity island-associated integrases in the genome plasticity of uropathogenic Escherichia coli strain 536.</title>
        <authorList>
            <person name="Hochhut B."/>
            <person name="Wilde C."/>
            <person name="Balling G."/>
            <person name="Middendorf B."/>
            <person name="Dobrindt U."/>
            <person name="Brzuszkiewicz E."/>
            <person name="Gottschalk G."/>
            <person name="Carniel E."/>
            <person name="Hacker J."/>
        </authorList>
    </citation>
    <scope>NUCLEOTIDE SEQUENCE [LARGE SCALE GENOMIC DNA]</scope>
    <source>
        <strain>536 / UPEC</strain>
    </source>
</reference>
<proteinExistence type="inferred from homology"/>
<gene>
    <name evidence="1" type="primary">bioF</name>
    <name type="ordered locus">ECP_0790</name>
</gene>